<accession>Q9D563</accession>
<protein>
    <recommendedName>
        <fullName evidence="11">Transmembrane protein 114</fullName>
    </recommendedName>
    <alternativeName>
        <fullName evidence="5">Claudin-26</fullName>
    </alternativeName>
</protein>
<organism>
    <name type="scientific">Mus musculus</name>
    <name type="common">Mouse</name>
    <dbReference type="NCBI Taxonomy" id="10090"/>
    <lineage>
        <taxon>Eukaryota</taxon>
        <taxon>Metazoa</taxon>
        <taxon>Chordata</taxon>
        <taxon>Craniata</taxon>
        <taxon>Vertebrata</taxon>
        <taxon>Euteleostomi</taxon>
        <taxon>Mammalia</taxon>
        <taxon>Eutheria</taxon>
        <taxon>Euarchontoglires</taxon>
        <taxon>Glires</taxon>
        <taxon>Rodentia</taxon>
        <taxon>Myomorpha</taxon>
        <taxon>Muroidea</taxon>
        <taxon>Muridae</taxon>
        <taxon>Murinae</taxon>
        <taxon>Mus</taxon>
        <taxon>Mus</taxon>
    </lineage>
</organism>
<comment type="subcellular location">
    <subcellularLocation>
        <location evidence="3">Cell junction</location>
        <location evidence="3">Tight junction</location>
    </subcellularLocation>
    <subcellularLocation>
        <location evidence="4">Lateral cell membrane</location>
        <topology evidence="1">Multi-pass membrane protein</topology>
    </subcellularLocation>
    <subcellularLocation>
        <location evidence="4">Apical cell membrane</location>
        <topology evidence="1">Multi-pass membrane protein</topology>
    </subcellularLocation>
    <text evidence="4">N-glycosylation at Asn-54 and Asn-88 is required for plasma membrane localization.</text>
</comment>
<comment type="developmental stage">
    <text evidence="2">Expressed weakly in the eye from as early as 13.5 dpc, with ocular expression up-regulated postnatally. By 10 weeks, expressed strongly in the lens epithelial cells and weakly in lens fibers. In adult, expressed in eye, brain and testis.</text>
</comment>
<evidence type="ECO:0000255" key="1"/>
<evidence type="ECO:0000269" key="2">
    <source>
    </source>
</evidence>
<evidence type="ECO:0000269" key="3">
    <source>
    </source>
</evidence>
<evidence type="ECO:0000269" key="4">
    <source>
    </source>
</evidence>
<evidence type="ECO:0000303" key="5">
    <source>
    </source>
</evidence>
<evidence type="ECO:0000305" key="6"/>
<evidence type="ECO:0000312" key="7">
    <source>
        <dbReference type="EMBL" id="AAH27071.1"/>
    </source>
</evidence>
<evidence type="ECO:0000312" key="8">
    <source>
        <dbReference type="EMBL" id="AAI47191.1"/>
    </source>
</evidence>
<evidence type="ECO:0000312" key="9">
    <source>
        <dbReference type="EMBL" id="BAB29961.1"/>
    </source>
</evidence>
<evidence type="ECO:0000312" key="10">
    <source>
        <dbReference type="EMBL" id="EDK97288.1"/>
    </source>
</evidence>
<evidence type="ECO:0000312" key="11">
    <source>
        <dbReference type="MGI" id="MGI:1921970"/>
    </source>
</evidence>
<gene>
    <name evidence="11" type="primary">Tmem114</name>
    <name type="synonym">Cldn26</name>
</gene>
<name>TM114_MOUSE</name>
<feature type="chain" id="PRO_0000352760" description="Transmembrane protein 114">
    <location>
        <begin position="1"/>
        <end position="222"/>
    </location>
</feature>
<feature type="transmembrane region" description="Helical" evidence="1">
    <location>
        <begin position="7"/>
        <end position="27"/>
    </location>
</feature>
<feature type="transmembrane region" description="Helical" evidence="1">
    <location>
        <begin position="105"/>
        <end position="125"/>
    </location>
</feature>
<feature type="transmembrane region" description="Helical" evidence="1">
    <location>
        <begin position="133"/>
        <end position="153"/>
    </location>
</feature>
<feature type="transmembrane region" description="Helical" evidence="1">
    <location>
        <begin position="188"/>
        <end position="208"/>
    </location>
</feature>
<feature type="glycosylation site" description="N-linked (GlcNAc...) asparagine" evidence="4">
    <location>
        <position position="54"/>
    </location>
</feature>
<feature type="glycosylation site" description="N-linked (GlcNAc...) asparagine" evidence="4">
    <location>
        <position position="88"/>
    </location>
</feature>
<feature type="mutagenesis site" description="Complete loss of glycosylation; when associated with K-88." evidence="4">
    <original>N</original>
    <variation>K</variation>
    <location>
        <position position="54"/>
    </location>
</feature>
<feature type="mutagenesis site" description="Complete loss of glycosylation; when associated with K-54." evidence="4">
    <original>N</original>
    <variation>K</variation>
    <location>
        <position position="88"/>
    </location>
</feature>
<dbReference type="EMBL" id="AK015757">
    <property type="protein sequence ID" value="BAB29961.1"/>
    <property type="molecule type" value="mRNA"/>
</dbReference>
<dbReference type="EMBL" id="CH466521">
    <property type="protein sequence ID" value="EDK97288.1"/>
    <property type="molecule type" value="Genomic_DNA"/>
</dbReference>
<dbReference type="EMBL" id="BC027071">
    <property type="protein sequence ID" value="AAH27071.1"/>
    <property type="molecule type" value="mRNA"/>
</dbReference>
<dbReference type="EMBL" id="BC147190">
    <property type="protein sequence ID" value="AAI47191.1"/>
    <property type="molecule type" value="mRNA"/>
</dbReference>
<dbReference type="EMBL" id="BC147191">
    <property type="protein sequence ID" value="AAI47192.1"/>
    <property type="molecule type" value="mRNA"/>
</dbReference>
<dbReference type="CCDS" id="CCDS27937.1"/>
<dbReference type="RefSeq" id="NP_083346.1">
    <property type="nucleotide sequence ID" value="NM_029070.2"/>
</dbReference>
<dbReference type="FunCoup" id="Q9D563">
    <property type="interactions" value="31"/>
</dbReference>
<dbReference type="IntAct" id="Q9D563">
    <property type="interactions" value="1"/>
</dbReference>
<dbReference type="MINT" id="Q9D563"/>
<dbReference type="STRING" id="10090.ENSMUSP00000023400"/>
<dbReference type="TCDB" id="8.A.16.2.7">
    <property type="family name" value="the ca(+) channel auxiliary subunit Gama1-Gama8 (ccaGama) family"/>
</dbReference>
<dbReference type="GlyCosmos" id="Q9D563">
    <property type="glycosylation" value="2 sites, No reported glycans"/>
</dbReference>
<dbReference type="GlyGen" id="Q9D563">
    <property type="glycosylation" value="2 sites"/>
</dbReference>
<dbReference type="iPTMnet" id="Q9D563"/>
<dbReference type="PhosphoSitePlus" id="Q9D563"/>
<dbReference type="SwissPalm" id="Q9D563"/>
<dbReference type="PaxDb" id="10090-ENSMUSP00000023400"/>
<dbReference type="ProteomicsDB" id="259211"/>
<dbReference type="Antibodypedia" id="51871">
    <property type="antibodies" value="11 antibodies from 9 providers"/>
</dbReference>
<dbReference type="DNASU" id="74720"/>
<dbReference type="Ensembl" id="ENSMUST00000023400.4">
    <property type="protein sequence ID" value="ENSMUSP00000023400.3"/>
    <property type="gene ID" value="ENSMUSG00000022715.4"/>
</dbReference>
<dbReference type="GeneID" id="74720"/>
<dbReference type="KEGG" id="mmu:74720"/>
<dbReference type="UCSC" id="uc007yck.1">
    <property type="organism name" value="mouse"/>
</dbReference>
<dbReference type="AGR" id="MGI:1921970"/>
<dbReference type="CTD" id="283953"/>
<dbReference type="MGI" id="MGI:1921970">
    <property type="gene designation" value="Tmem114"/>
</dbReference>
<dbReference type="VEuPathDB" id="HostDB:ENSMUSG00000022715"/>
<dbReference type="eggNOG" id="ENOG502QR97">
    <property type="taxonomic scope" value="Eukaryota"/>
</dbReference>
<dbReference type="GeneTree" id="ENSGT00390000011615"/>
<dbReference type="HOGENOM" id="CLU_102991_0_0_1"/>
<dbReference type="InParanoid" id="Q9D563"/>
<dbReference type="OMA" id="CVYVAYS"/>
<dbReference type="OrthoDB" id="9626630at2759"/>
<dbReference type="PhylomeDB" id="Q9D563"/>
<dbReference type="TreeFam" id="TF327980"/>
<dbReference type="BioGRID-ORCS" id="74720">
    <property type="hits" value="4 hits in 76 CRISPR screens"/>
</dbReference>
<dbReference type="ChiTaRS" id="Tmem114">
    <property type="organism name" value="mouse"/>
</dbReference>
<dbReference type="PRO" id="PR:Q9D563"/>
<dbReference type="Proteomes" id="UP000000589">
    <property type="component" value="Chromosome 16"/>
</dbReference>
<dbReference type="RNAct" id="Q9D563">
    <property type="molecule type" value="protein"/>
</dbReference>
<dbReference type="Bgee" id="ENSMUSG00000022715">
    <property type="expression patterns" value="Expressed in primary oocyte and 29 other cell types or tissues"/>
</dbReference>
<dbReference type="GO" id="GO:0016324">
    <property type="term" value="C:apical plasma membrane"/>
    <property type="evidence" value="ECO:0000314"/>
    <property type="project" value="MGI"/>
</dbReference>
<dbReference type="GO" id="GO:0016327">
    <property type="term" value="C:apicolateral plasma membrane"/>
    <property type="evidence" value="ECO:0000314"/>
    <property type="project" value="MGI"/>
</dbReference>
<dbReference type="FunFam" id="1.20.140.150:FF:000021">
    <property type="entry name" value="Transmembrane protein 114"/>
    <property type="match status" value="1"/>
</dbReference>
<dbReference type="Gene3D" id="1.20.140.150">
    <property type="match status" value="1"/>
</dbReference>
<dbReference type="InterPro" id="IPR004031">
    <property type="entry name" value="PMP22/EMP/MP20/Claudin"/>
</dbReference>
<dbReference type="InterPro" id="IPR039951">
    <property type="entry name" value="TMEM114/TMEM235"/>
</dbReference>
<dbReference type="PANTHER" id="PTHR20516:SF2">
    <property type="entry name" value="TRANSMEMBRANE PROTEIN 114"/>
    <property type="match status" value="1"/>
</dbReference>
<dbReference type="PANTHER" id="PTHR20516">
    <property type="entry name" value="TRANSMEMBRANE PROTEIN 114/235 FAMILY MEMBER"/>
    <property type="match status" value="1"/>
</dbReference>
<dbReference type="Pfam" id="PF13903">
    <property type="entry name" value="Claudin_2"/>
    <property type="match status" value="1"/>
</dbReference>
<keyword id="KW-0965">Cell junction</keyword>
<keyword id="KW-1003">Cell membrane</keyword>
<keyword id="KW-0325">Glycoprotein</keyword>
<keyword id="KW-0472">Membrane</keyword>
<keyword id="KW-1185">Reference proteome</keyword>
<keyword id="KW-0796">Tight junction</keyword>
<keyword id="KW-0812">Transmembrane</keyword>
<keyword id="KW-1133">Transmembrane helix</keyword>
<sequence>MRVRLGALAGAAALSGALSFVLLAAAIGTDFWYIIDTERLERSSQRMRDQGPANRSQQEPLSSHSGLWRTCRVQSSCTPLMNPFWQENVTVSDSSRQLLTMHGTFVILLPLSLIVMVFGGMTGFLSFLLRAHLLLLLTGILFLFGAMVTLTGISIYIAYSAVAFREAVCLLEERALLDQVDIRFGWSLALGWISFVSELLTGVVFLAAARALSLSQRQDQAI</sequence>
<proteinExistence type="evidence at protein level"/>
<reference evidence="9" key="1">
    <citation type="journal article" date="2005" name="Science">
        <title>The transcriptional landscape of the mammalian genome.</title>
        <authorList>
            <person name="Carninci P."/>
            <person name="Kasukawa T."/>
            <person name="Katayama S."/>
            <person name="Gough J."/>
            <person name="Frith M.C."/>
            <person name="Maeda N."/>
            <person name="Oyama R."/>
            <person name="Ravasi T."/>
            <person name="Lenhard B."/>
            <person name="Wells C."/>
            <person name="Kodzius R."/>
            <person name="Shimokawa K."/>
            <person name="Bajic V.B."/>
            <person name="Brenner S.E."/>
            <person name="Batalov S."/>
            <person name="Forrest A.R."/>
            <person name="Zavolan M."/>
            <person name="Davis M.J."/>
            <person name="Wilming L.G."/>
            <person name="Aidinis V."/>
            <person name="Allen J.E."/>
            <person name="Ambesi-Impiombato A."/>
            <person name="Apweiler R."/>
            <person name="Aturaliya R.N."/>
            <person name="Bailey T.L."/>
            <person name="Bansal M."/>
            <person name="Baxter L."/>
            <person name="Beisel K.W."/>
            <person name="Bersano T."/>
            <person name="Bono H."/>
            <person name="Chalk A.M."/>
            <person name="Chiu K.P."/>
            <person name="Choudhary V."/>
            <person name="Christoffels A."/>
            <person name="Clutterbuck D.R."/>
            <person name="Crowe M.L."/>
            <person name="Dalla E."/>
            <person name="Dalrymple B.P."/>
            <person name="de Bono B."/>
            <person name="Della Gatta G."/>
            <person name="di Bernardo D."/>
            <person name="Down T."/>
            <person name="Engstrom P."/>
            <person name="Fagiolini M."/>
            <person name="Faulkner G."/>
            <person name="Fletcher C.F."/>
            <person name="Fukushima T."/>
            <person name="Furuno M."/>
            <person name="Futaki S."/>
            <person name="Gariboldi M."/>
            <person name="Georgii-Hemming P."/>
            <person name="Gingeras T.R."/>
            <person name="Gojobori T."/>
            <person name="Green R.E."/>
            <person name="Gustincich S."/>
            <person name="Harbers M."/>
            <person name="Hayashi Y."/>
            <person name="Hensch T.K."/>
            <person name="Hirokawa N."/>
            <person name="Hill D."/>
            <person name="Huminiecki L."/>
            <person name="Iacono M."/>
            <person name="Ikeo K."/>
            <person name="Iwama A."/>
            <person name="Ishikawa T."/>
            <person name="Jakt M."/>
            <person name="Kanapin A."/>
            <person name="Katoh M."/>
            <person name="Kawasawa Y."/>
            <person name="Kelso J."/>
            <person name="Kitamura H."/>
            <person name="Kitano H."/>
            <person name="Kollias G."/>
            <person name="Krishnan S.P."/>
            <person name="Kruger A."/>
            <person name="Kummerfeld S.K."/>
            <person name="Kurochkin I.V."/>
            <person name="Lareau L.F."/>
            <person name="Lazarevic D."/>
            <person name="Lipovich L."/>
            <person name="Liu J."/>
            <person name="Liuni S."/>
            <person name="McWilliam S."/>
            <person name="Madan Babu M."/>
            <person name="Madera M."/>
            <person name="Marchionni L."/>
            <person name="Matsuda H."/>
            <person name="Matsuzawa S."/>
            <person name="Miki H."/>
            <person name="Mignone F."/>
            <person name="Miyake S."/>
            <person name="Morris K."/>
            <person name="Mottagui-Tabar S."/>
            <person name="Mulder N."/>
            <person name="Nakano N."/>
            <person name="Nakauchi H."/>
            <person name="Ng P."/>
            <person name="Nilsson R."/>
            <person name="Nishiguchi S."/>
            <person name="Nishikawa S."/>
            <person name="Nori F."/>
            <person name="Ohara O."/>
            <person name="Okazaki Y."/>
            <person name="Orlando V."/>
            <person name="Pang K.C."/>
            <person name="Pavan W.J."/>
            <person name="Pavesi G."/>
            <person name="Pesole G."/>
            <person name="Petrovsky N."/>
            <person name="Piazza S."/>
            <person name="Reed J."/>
            <person name="Reid J.F."/>
            <person name="Ring B.Z."/>
            <person name="Ringwald M."/>
            <person name="Rost B."/>
            <person name="Ruan Y."/>
            <person name="Salzberg S.L."/>
            <person name="Sandelin A."/>
            <person name="Schneider C."/>
            <person name="Schoenbach C."/>
            <person name="Sekiguchi K."/>
            <person name="Semple C.A."/>
            <person name="Seno S."/>
            <person name="Sessa L."/>
            <person name="Sheng Y."/>
            <person name="Shibata Y."/>
            <person name="Shimada H."/>
            <person name="Shimada K."/>
            <person name="Silva D."/>
            <person name="Sinclair B."/>
            <person name="Sperling S."/>
            <person name="Stupka E."/>
            <person name="Sugiura K."/>
            <person name="Sultana R."/>
            <person name="Takenaka Y."/>
            <person name="Taki K."/>
            <person name="Tammoja K."/>
            <person name="Tan S.L."/>
            <person name="Tang S."/>
            <person name="Taylor M.S."/>
            <person name="Tegner J."/>
            <person name="Teichmann S.A."/>
            <person name="Ueda H.R."/>
            <person name="van Nimwegen E."/>
            <person name="Verardo R."/>
            <person name="Wei C.L."/>
            <person name="Yagi K."/>
            <person name="Yamanishi H."/>
            <person name="Zabarovsky E."/>
            <person name="Zhu S."/>
            <person name="Zimmer A."/>
            <person name="Hide W."/>
            <person name="Bult C."/>
            <person name="Grimmond S.M."/>
            <person name="Teasdale R.D."/>
            <person name="Liu E.T."/>
            <person name="Brusic V."/>
            <person name="Quackenbush J."/>
            <person name="Wahlestedt C."/>
            <person name="Mattick J.S."/>
            <person name="Hume D.A."/>
            <person name="Kai C."/>
            <person name="Sasaki D."/>
            <person name="Tomaru Y."/>
            <person name="Fukuda S."/>
            <person name="Kanamori-Katayama M."/>
            <person name="Suzuki M."/>
            <person name="Aoki J."/>
            <person name="Arakawa T."/>
            <person name="Iida J."/>
            <person name="Imamura K."/>
            <person name="Itoh M."/>
            <person name="Kato T."/>
            <person name="Kawaji H."/>
            <person name="Kawagashira N."/>
            <person name="Kawashima T."/>
            <person name="Kojima M."/>
            <person name="Kondo S."/>
            <person name="Konno H."/>
            <person name="Nakano K."/>
            <person name="Ninomiya N."/>
            <person name="Nishio T."/>
            <person name="Okada M."/>
            <person name="Plessy C."/>
            <person name="Shibata K."/>
            <person name="Shiraki T."/>
            <person name="Suzuki S."/>
            <person name="Tagami M."/>
            <person name="Waki K."/>
            <person name="Watahiki A."/>
            <person name="Okamura-Oho Y."/>
            <person name="Suzuki H."/>
            <person name="Kawai J."/>
            <person name="Hayashizaki Y."/>
        </authorList>
    </citation>
    <scope>NUCLEOTIDE SEQUENCE [LARGE SCALE MRNA]</scope>
    <source>
        <strain evidence="9">C57BL/6J</strain>
        <tissue evidence="9">Testis</tissue>
    </source>
</reference>
<reference evidence="10" key="2">
    <citation type="submission" date="2005-07" db="EMBL/GenBank/DDBJ databases">
        <authorList>
            <person name="Mural R.J."/>
            <person name="Adams M.D."/>
            <person name="Myers E.W."/>
            <person name="Smith H.O."/>
            <person name="Venter J.C."/>
        </authorList>
    </citation>
    <scope>NUCLEOTIDE SEQUENCE [LARGE SCALE GENOMIC DNA]</scope>
</reference>
<reference evidence="7" key="3">
    <citation type="journal article" date="2004" name="Genome Res.">
        <title>The status, quality, and expansion of the NIH full-length cDNA project: the Mammalian Gene Collection (MGC).</title>
        <authorList>
            <consortium name="The MGC Project Team"/>
        </authorList>
    </citation>
    <scope>NUCLEOTIDE SEQUENCE [LARGE SCALE MRNA]</scope>
    <source>
        <strain evidence="7">C57BL/6J</strain>
        <tissue evidence="8">Brain</tissue>
        <tissue evidence="7">Eye</tissue>
    </source>
</reference>
<reference evidence="6" key="4">
    <citation type="journal article" date="2007" name="Hum. Mutat.">
        <title>Characterization of a familial t(16;22) balanced translocation associated with congenital cataract leads to identification of a novel gene, TMEM114, expressed in the lens and disrupted by the translocation.</title>
        <authorList>
            <person name="Jamieson R.V."/>
            <person name="Farrar N."/>
            <person name="Stewart K."/>
            <person name="Perveen R."/>
            <person name="Mihelec M."/>
            <person name="Carette M."/>
            <person name="Grigg J.R."/>
            <person name="McAvoy J.W."/>
            <person name="Lovicu F.J."/>
            <person name="Tam P.P.L."/>
            <person name="Scambler P."/>
            <person name="Lloyd I.C."/>
            <person name="Donnai D."/>
            <person name="Black G.C.M."/>
        </authorList>
    </citation>
    <scope>DEVELOPMENTAL STAGE</scope>
</reference>
<reference key="5">
    <citation type="journal article" date="2010" name="Cell">
        <title>A tissue-specific atlas of mouse protein phosphorylation and expression.</title>
        <authorList>
            <person name="Huttlin E.L."/>
            <person name="Jedrychowski M.P."/>
            <person name="Elias J.E."/>
            <person name="Goswami T."/>
            <person name="Rad R."/>
            <person name="Beausoleil S.A."/>
            <person name="Villen J."/>
            <person name="Haas W."/>
            <person name="Sowa M.E."/>
            <person name="Gygi S.P."/>
        </authorList>
    </citation>
    <scope>IDENTIFICATION BY MASS SPECTROMETRY [LARGE SCALE ANALYSIS]</scope>
    <source>
        <tissue>Testis</tissue>
    </source>
</reference>
<reference key="6">
    <citation type="journal article" date="2011" name="FEBS Lett.">
        <title>Predicted expansion of the claudin multigene family.</title>
        <authorList>
            <person name="Mineta K."/>
            <person name="Yamamoto Y."/>
            <person name="Yamazaki Y."/>
            <person name="Tanaka H."/>
            <person name="Tada Y."/>
            <person name="Saito K."/>
            <person name="Tamura A."/>
            <person name="Igarashi M."/>
            <person name="Endo T."/>
            <person name="Takeuchi K."/>
            <person name="Tsukita S."/>
        </authorList>
    </citation>
    <scope>IDENTIFICATION</scope>
    <scope>SUBCELLULAR LOCATION</scope>
</reference>
<reference key="7">
    <citation type="journal article" date="2011" name="FEBS Lett.">
        <title>The cataract-associated protein TMEM114, and TMEM235, are glycosylated transmembrane proteins that are distinct from claudin family members.</title>
        <authorList>
            <person name="Maher G.J."/>
            <person name="Hilton E.N."/>
            <person name="Urquhart J.E."/>
            <person name="Davidson A.E."/>
            <person name="Spencer H.L."/>
            <person name="Black G.C."/>
            <person name="Manson F.D."/>
        </authorList>
    </citation>
    <scope>SUBCELLULAR LOCATION</scope>
    <scope>GLYCOSYLATION AT ASN-54 AND ASN-88</scope>
    <scope>MUTAGENESIS OF ASN-54 AND ASN-88</scope>
</reference>